<evidence type="ECO:0000255" key="1">
    <source>
        <dbReference type="PROSITE-ProRule" id="PRU10023"/>
    </source>
</evidence>
<evidence type="ECO:0000305" key="2"/>
<comment type="function">
    <text>The primary product of this enzyme is 4,2',4',6'-tetrahydroxychalcone (also termed naringenin-chalcone or chalcone) which can under specific conditions spontaneously isomerize into naringenin.</text>
</comment>
<comment type="catalytic activity">
    <reaction evidence="1">
        <text>(E)-4-coumaroyl-CoA + 3 malonyl-CoA + 3 H(+) = 2',4,4',6'-tetrahydroxychalcone + 3 CO2 + 4 CoA</text>
        <dbReference type="Rhea" id="RHEA:11128"/>
        <dbReference type="ChEBI" id="CHEBI:15378"/>
        <dbReference type="ChEBI" id="CHEBI:15413"/>
        <dbReference type="ChEBI" id="CHEBI:16526"/>
        <dbReference type="ChEBI" id="CHEBI:57287"/>
        <dbReference type="ChEBI" id="CHEBI:57384"/>
        <dbReference type="ChEBI" id="CHEBI:85008"/>
        <dbReference type="EC" id="2.3.1.74"/>
    </reaction>
</comment>
<comment type="pathway">
    <text>Secondary metabolite biosynthesis; flavonoid biosynthesis.</text>
</comment>
<comment type="similarity">
    <text evidence="2">Belongs to the thiolase-like superfamily. Chalcone/stilbene synthases family.</text>
</comment>
<sequence>MVNVEAIRKVQRAEGPATIMAIGTSTPPNAVDQSEYPDYYYFGSPTASTRPSSRRSFKRMCEKSMIKKRYMYLTETYWKRIQMFVPTWLLPLKARQDMVVVEVPKLGKEVQPKAIKGMGQPKSKINPLVFCTTSGVDMPGADYQLTKVFGLPPSVKRLMMYQQGCFAGGTVLRLAKDLAENNKGARVLVVCSEITAVTFRGPSDTHLDSLVGQALFGDGAAALIVGADPVPGVENPMFELVSAGQTILPDSDGAIDGHLREVGLTFHLLKVVPGLISKNIEKSLVEAFEPLGISDWNSLFWIAHPGGPAILDPGGDQTRPEARESCGNQACFSVSMATCQVFVCSSFSTRCEGSPKEEGLKTTGEGIEWGVLFGFGPGLTVETVVLHSLPTH</sequence>
<keyword id="KW-0012">Acyltransferase</keyword>
<keyword id="KW-0284">Flavonoid biosynthesis</keyword>
<keyword id="KW-0808">Transferase</keyword>
<accession>Q9ZU06</accession>
<feature type="chain" id="PRO_0000216026" description="Chalcone synthase">
    <location>
        <begin position="1"/>
        <end position="392"/>
    </location>
</feature>
<feature type="active site" evidence="1">
    <location>
        <position position="165"/>
    </location>
</feature>
<organism>
    <name type="scientific">Persea americana</name>
    <name type="common">Avocado</name>
    <dbReference type="NCBI Taxonomy" id="3435"/>
    <lineage>
        <taxon>Eukaryota</taxon>
        <taxon>Viridiplantae</taxon>
        <taxon>Streptophyta</taxon>
        <taxon>Embryophyta</taxon>
        <taxon>Tracheophyta</taxon>
        <taxon>Spermatophyta</taxon>
        <taxon>Magnoliopsida</taxon>
        <taxon>Magnoliidae</taxon>
        <taxon>Laurales</taxon>
        <taxon>Lauraceae</taxon>
        <taxon>Persea</taxon>
    </lineage>
</organism>
<dbReference type="EC" id="2.3.1.74"/>
<dbReference type="EMBL" id="AD001672">
    <property type="protein sequence ID" value="AAC98143.1"/>
    <property type="molecule type" value="mRNA"/>
</dbReference>
<dbReference type="SMR" id="Q9ZU06"/>
<dbReference type="UniPathway" id="UPA00154"/>
<dbReference type="GO" id="GO:0016210">
    <property type="term" value="F:naringenin-chalcone synthase activity"/>
    <property type="evidence" value="ECO:0007669"/>
    <property type="project" value="UniProtKB-EC"/>
</dbReference>
<dbReference type="GO" id="GO:0009813">
    <property type="term" value="P:flavonoid biosynthetic process"/>
    <property type="evidence" value="ECO:0007669"/>
    <property type="project" value="UniProtKB-UniPathway"/>
</dbReference>
<dbReference type="GO" id="GO:0030639">
    <property type="term" value="P:polyketide biosynthetic process"/>
    <property type="evidence" value="ECO:0007669"/>
    <property type="project" value="TreeGrafter"/>
</dbReference>
<dbReference type="CDD" id="cd00831">
    <property type="entry name" value="CHS_like"/>
    <property type="match status" value="1"/>
</dbReference>
<dbReference type="FunFam" id="3.40.47.10:FF:000025">
    <property type="entry name" value="Chalcone synthase 2"/>
    <property type="match status" value="1"/>
</dbReference>
<dbReference type="Gene3D" id="3.40.47.10">
    <property type="match status" value="2"/>
</dbReference>
<dbReference type="InterPro" id="IPR012328">
    <property type="entry name" value="Chalcone/stilbene_synt_C"/>
</dbReference>
<dbReference type="InterPro" id="IPR001099">
    <property type="entry name" value="Chalcone/stilbene_synt_N"/>
</dbReference>
<dbReference type="InterPro" id="IPR018088">
    <property type="entry name" value="Chalcone/stilbene_synthase_AS"/>
</dbReference>
<dbReference type="InterPro" id="IPR011141">
    <property type="entry name" value="Polyketide_synthase_type-III"/>
</dbReference>
<dbReference type="InterPro" id="IPR016039">
    <property type="entry name" value="Thiolase-like"/>
</dbReference>
<dbReference type="PANTHER" id="PTHR11877:SF80">
    <property type="entry name" value="CHALCONE SYNTHASE 1"/>
    <property type="match status" value="1"/>
</dbReference>
<dbReference type="PANTHER" id="PTHR11877">
    <property type="entry name" value="HYDROXYMETHYLGLUTARYL-COA SYNTHASE"/>
    <property type="match status" value="1"/>
</dbReference>
<dbReference type="Pfam" id="PF02797">
    <property type="entry name" value="Chal_sti_synt_C"/>
    <property type="match status" value="1"/>
</dbReference>
<dbReference type="Pfam" id="PF00195">
    <property type="entry name" value="Chal_sti_synt_N"/>
    <property type="match status" value="1"/>
</dbReference>
<dbReference type="PIRSF" id="PIRSF000451">
    <property type="entry name" value="PKS_III"/>
    <property type="match status" value="1"/>
</dbReference>
<dbReference type="SUPFAM" id="SSF53901">
    <property type="entry name" value="Thiolase-like"/>
    <property type="match status" value="2"/>
</dbReference>
<dbReference type="PROSITE" id="PS00441">
    <property type="entry name" value="CHALCONE_SYNTH"/>
    <property type="match status" value="1"/>
</dbReference>
<proteinExistence type="evidence at transcript level"/>
<protein>
    <recommendedName>
        <fullName>Chalcone synthase</fullName>
        <ecNumber>2.3.1.74</ecNumber>
    </recommendedName>
    <alternativeName>
        <fullName>Naregenin-chalcone synthase</fullName>
    </alternativeName>
</protein>
<reference key="1">
    <citation type="journal article" date="1998" name="Physiol. Mol. Plant Pathol.">
        <title>Involvement of epicatechin biosynthesis in the activation of the mechanism of resistance of avocado fruits to Colletotrichum gloeosporioides.</title>
        <authorList>
            <person name="Ardi R."/>
            <person name="Kobiler I."/>
            <person name="Jacoby B."/>
            <person name="Keen N.T."/>
            <person name="Prusky D."/>
        </authorList>
    </citation>
    <scope>NUCLEOTIDE SEQUENCE [MRNA]</scope>
</reference>
<name>CHSY_PERAE</name>
<gene>
    <name type="primary">CHS</name>
</gene>